<keyword id="KW-0002">3D-structure</keyword>
<keyword id="KW-0028">Amino-acid biosynthesis</keyword>
<keyword id="KW-0032">Aminotransferase</keyword>
<keyword id="KW-0055">Arginine biosynthesis</keyword>
<keyword id="KW-0963">Cytoplasm</keyword>
<keyword id="KW-0457">Lysine biosynthesis</keyword>
<keyword id="KW-0663">Pyridoxal phosphate</keyword>
<keyword id="KW-1185">Reference proteome</keyword>
<keyword id="KW-0808">Transferase</keyword>
<reference key="1">
    <citation type="journal article" date="2001" name="Nature">
        <title>Complete genome sequence of Salmonella enterica serovar Typhimurium LT2.</title>
        <authorList>
            <person name="McClelland M."/>
            <person name="Sanderson K.E."/>
            <person name="Spieth J."/>
            <person name="Clifton S.W."/>
            <person name="Latreille P."/>
            <person name="Courtney L."/>
            <person name="Porwollik S."/>
            <person name="Ali J."/>
            <person name="Dante M."/>
            <person name="Du F."/>
            <person name="Hou S."/>
            <person name="Layman D."/>
            <person name="Leonard S."/>
            <person name="Nguyen C."/>
            <person name="Scott K."/>
            <person name="Holmes A."/>
            <person name="Grewal N."/>
            <person name="Mulvaney E."/>
            <person name="Ryan E."/>
            <person name="Sun H."/>
            <person name="Florea L."/>
            <person name="Miller W."/>
            <person name="Stoneking T."/>
            <person name="Nhan M."/>
            <person name="Waterston R."/>
            <person name="Wilson R.K."/>
        </authorList>
    </citation>
    <scope>NUCLEOTIDE SEQUENCE [LARGE SCALE GENOMIC DNA]</scope>
    <source>
        <strain>LT2 / SGSC1412 / ATCC 700720</strain>
    </source>
</reference>
<reference key="2">
    <citation type="journal article" date="1990" name="J. Bacteriol.">
        <title>Chromosomal organization and expression of Escherichia coli pabA.</title>
        <authorList>
            <person name="Tran P.V."/>
            <person name="Bannor T.A."/>
            <person name="Doktor S.Z."/>
            <person name="Nichols B.P."/>
        </authorList>
    </citation>
    <scope>NUCLEOTIDE SEQUENCE [GENOMIC DNA] OF 1-17</scope>
</reference>
<reference key="3">
    <citation type="journal article" date="2008" name="Proteins">
        <title>Structure of biosynthetic N-acetylornithine aminotransferase from Salmonella typhimurium: studies on substrate specificity and inhibitor binding.</title>
        <authorList>
            <person name="Rajaram V."/>
            <person name="Ratna Prasuna P."/>
            <person name="Savithri H.S."/>
            <person name="Murthy M.R."/>
        </authorList>
    </citation>
    <scope>X-RAY CRYSTALLOGRAPHY (1.96 ANGSTROMS) IN COMPLEXES WITH PLP</scope>
    <scope>CATALYTIC ACTIVITY</scope>
    <scope>COFACTOR</scope>
    <scope>SUBUNIT</scope>
    <scope>ACTIVITY REGULATION</scope>
    <scope>BIOPHYSICOCHEMICAL PROPERTIES</scope>
    <scope>PATHWAY</scope>
</reference>
<gene>
    <name evidence="2" type="primary">argD</name>
    <name type="synonym">dapC</name>
    <name type="synonym">dtu</name>
    <name type="ordered locus">STM3468</name>
</gene>
<name>ARGD_SALTY</name>
<evidence type="ECO:0000250" key="1"/>
<evidence type="ECO:0000255" key="2">
    <source>
        <dbReference type="HAMAP-Rule" id="MF_01107"/>
    </source>
</evidence>
<evidence type="ECO:0000269" key="3">
    <source>
    </source>
</evidence>
<evidence type="ECO:0000305" key="4"/>
<evidence type="ECO:0000305" key="5">
    <source>
    </source>
</evidence>
<evidence type="ECO:0007829" key="6">
    <source>
        <dbReference type="PDB" id="4JEX"/>
    </source>
</evidence>
<evidence type="ECO:0007829" key="7">
    <source>
        <dbReference type="PDB" id="4JF1"/>
    </source>
</evidence>
<proteinExistence type="evidence at protein level"/>
<sequence>MATEQTAITRATFDEVILPVYAPADFIPVKGKGSRVWDQQGKEYIDFAGGIAVTALGHCHPALVEALKSQGETLWHTSNVFTNEPALRLGRKLIDATFAERVLFMNSGTEANETAFKLARHYACVRHSPFKTKIIAFHNAFHGRSLFTVSVGGQPKYSDGFGPKPADIIHVPFNDLHAVKAVMDDHTCAVVVEPIQGEGGVQAATPEFLKGLRDLCDEHQALLVFDEVQCGMGRTGDLFAYMHYGVTPDILTSAKALGGGFPVSAMLTTQEIASAFHVGSHGSTYGGNPLACAVAGAAFDIINTPEVLQGIHTKRQQFVQHLQAIDEQFDIFSDIRGMGLLIGAELKPKYKGRARDFLYAGAEAGVMVLNAGADVMRFAPSLVVEEADIHEGMQRFAQAVGKVVA</sequence>
<accession>P40732</accession>
<comment type="function">
    <text evidence="2">Involved in both the arginine and lysine biosynthetic pathways.</text>
</comment>
<comment type="catalytic activity">
    <reaction evidence="2 3">
        <text>N(2)-acetyl-L-ornithine + 2-oxoglutarate = N-acetyl-L-glutamate 5-semialdehyde + L-glutamate</text>
        <dbReference type="Rhea" id="RHEA:18049"/>
        <dbReference type="ChEBI" id="CHEBI:16810"/>
        <dbReference type="ChEBI" id="CHEBI:29123"/>
        <dbReference type="ChEBI" id="CHEBI:29985"/>
        <dbReference type="ChEBI" id="CHEBI:57805"/>
        <dbReference type="EC" id="2.6.1.11"/>
    </reaction>
</comment>
<comment type="catalytic activity">
    <reaction evidence="2">
        <text>N-succinyl-(2S,6S)-2,6-diaminopimelate + 2-oxoglutarate = (S)-2-succinylamino-6-oxoheptanedioate + L-glutamate</text>
        <dbReference type="Rhea" id="RHEA:11960"/>
        <dbReference type="ChEBI" id="CHEBI:15685"/>
        <dbReference type="ChEBI" id="CHEBI:16810"/>
        <dbReference type="ChEBI" id="CHEBI:29985"/>
        <dbReference type="ChEBI" id="CHEBI:58087"/>
        <dbReference type="EC" id="2.6.1.17"/>
    </reaction>
</comment>
<comment type="cofactor">
    <cofactor evidence="2 3">
        <name>pyridoxal 5'-phosphate</name>
        <dbReference type="ChEBI" id="CHEBI:597326"/>
    </cofactor>
    <text evidence="2 3">Binds 1 pyridoxal phosphate per subunit.</text>
</comment>
<comment type="activity regulation">
    <text evidence="3">Inhibited by gabaculine (Gcn).</text>
</comment>
<comment type="biophysicochemical properties">
    <kinetics>
        <KM evidence="3">37 uM for N-acetylornithine (at pH 9.5 and 25 degrees Celsius)</KM>
        <KM evidence="3">640 uM for ornithine (at pH 9.5 and 25 degrees Celsius)</KM>
    </kinetics>
    <phDependence>
        <text evidence="3">Optimum pH is 9.5. At pH 8.0, the activity is reduced by 50%.</text>
    </phDependence>
</comment>
<comment type="pathway">
    <text evidence="2 5">Amino-acid biosynthesis; L-arginine biosynthesis; N(2)-acetyl-L-ornithine from L-glutamate: step 4/4.</text>
</comment>
<comment type="pathway">
    <text evidence="2">Amino-acid biosynthesis; L-lysine biosynthesis via DAP pathway; LL-2,6-diaminopimelate from (S)-tetrahydrodipicolinate (succinylase route): step 2/3.</text>
</comment>
<comment type="subunit">
    <text evidence="2 3">Homodimer.</text>
</comment>
<comment type="subcellular location">
    <subcellularLocation>
        <location evidence="2">Cytoplasm</location>
    </subcellularLocation>
</comment>
<comment type="miscellaneous">
    <text evidence="3">The reaction catalyzed by ACOAT is highly reversible. This enzyme may also transaminate ornithine.</text>
</comment>
<comment type="similarity">
    <text evidence="2">Belongs to the class-III pyridoxal-phosphate-dependent aminotransferase family. ArgD subfamily.</text>
</comment>
<organism>
    <name type="scientific">Salmonella typhimurium (strain LT2 / SGSC1412 / ATCC 700720)</name>
    <dbReference type="NCBI Taxonomy" id="99287"/>
    <lineage>
        <taxon>Bacteria</taxon>
        <taxon>Pseudomonadati</taxon>
        <taxon>Pseudomonadota</taxon>
        <taxon>Gammaproteobacteria</taxon>
        <taxon>Enterobacterales</taxon>
        <taxon>Enterobacteriaceae</taxon>
        <taxon>Salmonella</taxon>
    </lineage>
</organism>
<protein>
    <recommendedName>
        <fullName evidence="2 4">Acetylornithine/succinyldiaminopimelate aminotransferase</fullName>
        <shortName evidence="2">ACOAT</shortName>
        <shortName evidence="2">DapATase</shortName>
        <shortName evidence="2">Succinyldiaminopimelate transferase</shortName>
        <ecNumber evidence="2 3">2.6.1.11</ecNumber>
        <ecNumber evidence="2">2.6.1.17</ecNumber>
    </recommendedName>
</protein>
<feature type="initiator methionine" description="Removed" evidence="1">
    <location>
        <position position="1"/>
    </location>
</feature>
<feature type="chain" id="PRO_0000112777" description="Acetylornithine/succinyldiaminopimelate aminotransferase">
    <location>
        <begin position="2"/>
        <end position="405"/>
    </location>
</feature>
<feature type="binding site" evidence="2 3">
    <location>
        <begin position="108"/>
        <end position="109"/>
    </location>
    <ligand>
        <name>pyridoxal 5'-phosphate</name>
        <dbReference type="ChEBI" id="CHEBI:597326"/>
    </ligand>
</feature>
<feature type="binding site" evidence="2 5">
    <location>
        <position position="141"/>
    </location>
    <ligand>
        <name>pyridoxal 5'-phosphate</name>
        <dbReference type="ChEBI" id="CHEBI:597326"/>
    </ligand>
</feature>
<feature type="binding site" evidence="2">
    <location>
        <position position="144"/>
    </location>
    <ligand>
        <name>N(2)-acetyl-L-ornithine</name>
        <dbReference type="ChEBI" id="CHEBI:57805"/>
    </ligand>
</feature>
<feature type="binding site" evidence="2 5">
    <location>
        <begin position="226"/>
        <end position="229"/>
    </location>
    <ligand>
        <name>pyridoxal 5'-phosphate</name>
        <dbReference type="ChEBI" id="CHEBI:597326"/>
    </ligand>
</feature>
<feature type="binding site" evidence="2">
    <location>
        <position position="283"/>
    </location>
    <ligand>
        <name>N(2)-acetyl-L-ornithine</name>
        <dbReference type="ChEBI" id="CHEBI:57805"/>
    </ligand>
</feature>
<feature type="binding site" evidence="2 3">
    <location>
        <position position="284"/>
    </location>
    <ligand>
        <name>pyridoxal 5'-phosphate</name>
        <dbReference type="ChEBI" id="CHEBI:597326"/>
    </ligand>
</feature>
<feature type="modified residue" description="N6-(pyridoxal phosphate)lysine" evidence="2 3">
    <location>
        <position position="255"/>
    </location>
</feature>
<feature type="sequence conflict" description="In Ref. 2; AAA24265/AAA27178." evidence="4" ref="2">
    <original>T</original>
    <variation>I</variation>
    <location>
        <position position="3"/>
    </location>
</feature>
<feature type="helix" evidence="7">
    <location>
        <begin position="13"/>
        <end position="16"/>
    </location>
</feature>
<feature type="strand" evidence="7">
    <location>
        <begin position="28"/>
        <end position="33"/>
    </location>
</feature>
<feature type="strand" evidence="7">
    <location>
        <begin position="35"/>
        <end position="38"/>
    </location>
</feature>
<feature type="strand" evidence="7">
    <location>
        <begin position="43"/>
        <end position="48"/>
    </location>
</feature>
<feature type="helix" evidence="7">
    <location>
        <begin position="49"/>
        <end position="52"/>
    </location>
</feature>
<feature type="helix" evidence="7">
    <location>
        <begin position="61"/>
        <end position="71"/>
    </location>
</feature>
<feature type="helix" evidence="7">
    <location>
        <begin position="84"/>
        <end position="96"/>
    </location>
</feature>
<feature type="strand" evidence="7">
    <location>
        <begin position="100"/>
        <end position="107"/>
    </location>
</feature>
<feature type="helix" evidence="7">
    <location>
        <begin position="108"/>
        <end position="126"/>
    </location>
</feature>
<feature type="strand" evidence="7">
    <location>
        <begin position="133"/>
        <end position="137"/>
    </location>
</feature>
<feature type="helix" evidence="7">
    <location>
        <begin position="146"/>
        <end position="151"/>
    </location>
</feature>
<feature type="helix" evidence="7">
    <location>
        <begin position="155"/>
        <end position="158"/>
    </location>
</feature>
<feature type="strand" evidence="7">
    <location>
        <begin position="161"/>
        <end position="163"/>
    </location>
</feature>
<feature type="strand" evidence="7">
    <location>
        <begin position="168"/>
        <end position="171"/>
    </location>
</feature>
<feature type="helix" evidence="7">
    <location>
        <begin position="176"/>
        <end position="182"/>
    </location>
</feature>
<feature type="strand" evidence="7">
    <location>
        <begin position="187"/>
        <end position="192"/>
    </location>
</feature>
<feature type="strand" evidence="7">
    <location>
        <begin position="194"/>
        <end position="196"/>
    </location>
</feature>
<feature type="turn" evidence="7">
    <location>
        <begin position="197"/>
        <end position="200"/>
    </location>
</feature>
<feature type="strand" evidence="7">
    <location>
        <begin position="201"/>
        <end position="203"/>
    </location>
</feature>
<feature type="helix" evidence="7">
    <location>
        <begin position="206"/>
        <end position="219"/>
    </location>
</feature>
<feature type="strand" evidence="7">
    <location>
        <begin position="222"/>
        <end position="226"/>
    </location>
</feature>
<feature type="turn" evidence="7">
    <location>
        <begin position="228"/>
        <end position="235"/>
    </location>
</feature>
<feature type="strand" evidence="7">
    <location>
        <begin position="236"/>
        <end position="239"/>
    </location>
</feature>
<feature type="helix" evidence="7">
    <location>
        <begin position="240"/>
        <end position="244"/>
    </location>
</feature>
<feature type="strand" evidence="7">
    <location>
        <begin position="249"/>
        <end position="253"/>
    </location>
</feature>
<feature type="helix" evidence="7">
    <location>
        <begin position="255"/>
        <end position="258"/>
    </location>
</feature>
<feature type="strand" evidence="7">
    <location>
        <begin position="264"/>
        <end position="268"/>
    </location>
</feature>
<feature type="helix" evidence="7">
    <location>
        <begin position="270"/>
        <end position="273"/>
    </location>
</feature>
<feature type="strand" evidence="6">
    <location>
        <begin position="284"/>
        <end position="286"/>
    </location>
</feature>
<feature type="helix" evidence="7">
    <location>
        <begin position="289"/>
        <end position="302"/>
    </location>
</feature>
<feature type="helix" evidence="7">
    <location>
        <begin position="305"/>
        <end position="329"/>
    </location>
</feature>
<feature type="strand" evidence="7">
    <location>
        <begin position="332"/>
        <end position="338"/>
    </location>
</feature>
<feature type="strand" evidence="7">
    <location>
        <begin position="341"/>
        <end position="346"/>
    </location>
</feature>
<feature type="helix" evidence="7">
    <location>
        <begin position="348"/>
        <end position="350"/>
    </location>
</feature>
<feature type="helix" evidence="7">
    <location>
        <begin position="354"/>
        <end position="363"/>
    </location>
</feature>
<feature type="strand" evidence="7">
    <location>
        <begin position="369"/>
        <end position="372"/>
    </location>
</feature>
<feature type="strand" evidence="7">
    <location>
        <begin position="375"/>
        <end position="378"/>
    </location>
</feature>
<feature type="helix" evidence="7">
    <location>
        <begin position="386"/>
        <end position="405"/>
    </location>
</feature>
<dbReference type="EC" id="2.6.1.11" evidence="2 3"/>
<dbReference type="EC" id="2.6.1.17" evidence="2"/>
<dbReference type="EMBL" id="AE006468">
    <property type="protein sequence ID" value="AAL22330.1"/>
    <property type="molecule type" value="Genomic_DNA"/>
</dbReference>
<dbReference type="EMBL" id="M32354">
    <property type="protein sequence ID" value="AAA24265.1"/>
    <property type="molecule type" value="Genomic_DNA"/>
</dbReference>
<dbReference type="EMBL" id="M32355">
    <property type="protein sequence ID" value="AAA27178.1"/>
    <property type="molecule type" value="Genomic_DNA"/>
</dbReference>
<dbReference type="RefSeq" id="NP_462371.1">
    <property type="nucleotide sequence ID" value="NC_003197.2"/>
</dbReference>
<dbReference type="RefSeq" id="WP_000190023.1">
    <property type="nucleotide sequence ID" value="NC_003197.2"/>
</dbReference>
<dbReference type="PDB" id="2PB0">
    <property type="method" value="X-ray"/>
    <property type="resolution" value="1.96 A"/>
    <property type="chains" value="A/B=1-405"/>
</dbReference>
<dbReference type="PDB" id="2PB2">
    <property type="method" value="X-ray"/>
    <property type="resolution" value="1.91 A"/>
    <property type="chains" value="A/B=1-405"/>
</dbReference>
<dbReference type="PDB" id="4JEV">
    <property type="method" value="X-ray"/>
    <property type="resolution" value="1.67 A"/>
    <property type="chains" value="A/B=1-405"/>
</dbReference>
<dbReference type="PDB" id="4JEW">
    <property type="method" value="X-ray"/>
    <property type="resolution" value="1.48 A"/>
    <property type="chains" value="A/B=1-405"/>
</dbReference>
<dbReference type="PDB" id="4JEX">
    <property type="method" value="X-ray"/>
    <property type="resolution" value="1.43 A"/>
    <property type="chains" value="A/B=1-405"/>
</dbReference>
<dbReference type="PDB" id="4JEY">
    <property type="method" value="X-ray"/>
    <property type="resolution" value="1.55 A"/>
    <property type="chains" value="A/B=1-405"/>
</dbReference>
<dbReference type="PDB" id="4JEZ">
    <property type="method" value="X-ray"/>
    <property type="resolution" value="1.55 A"/>
    <property type="chains" value="A/B=1-405"/>
</dbReference>
<dbReference type="PDB" id="4JF0">
    <property type="method" value="X-ray"/>
    <property type="resolution" value="2.10 A"/>
    <property type="chains" value="A/B=1-405"/>
</dbReference>
<dbReference type="PDB" id="4JF1">
    <property type="method" value="X-ray"/>
    <property type="resolution" value="1.28 A"/>
    <property type="chains" value="A/B=1-405"/>
</dbReference>
<dbReference type="PDBsum" id="2PB0"/>
<dbReference type="PDBsum" id="2PB2"/>
<dbReference type="PDBsum" id="4JEV"/>
<dbReference type="PDBsum" id="4JEW"/>
<dbReference type="PDBsum" id="4JEX"/>
<dbReference type="PDBsum" id="4JEY"/>
<dbReference type="PDBsum" id="4JEZ"/>
<dbReference type="PDBsum" id="4JF0"/>
<dbReference type="PDBsum" id="4JF1"/>
<dbReference type="SMR" id="P40732"/>
<dbReference type="STRING" id="99287.STM3468"/>
<dbReference type="PaxDb" id="99287-STM3468"/>
<dbReference type="GeneID" id="1254991"/>
<dbReference type="KEGG" id="stm:STM3468"/>
<dbReference type="PATRIC" id="fig|99287.12.peg.3665"/>
<dbReference type="HOGENOM" id="CLU_016922_10_1_6"/>
<dbReference type="PhylomeDB" id="P40732"/>
<dbReference type="BioCyc" id="SENT99287:STM3468-MONOMER"/>
<dbReference type="SABIO-RK" id="P40732"/>
<dbReference type="UniPathway" id="UPA00034">
    <property type="reaction ID" value="UER00020"/>
</dbReference>
<dbReference type="UniPathway" id="UPA00068">
    <property type="reaction ID" value="UER00109"/>
</dbReference>
<dbReference type="EvolutionaryTrace" id="P40732"/>
<dbReference type="Proteomes" id="UP000001014">
    <property type="component" value="Chromosome"/>
</dbReference>
<dbReference type="GO" id="GO:0005737">
    <property type="term" value="C:cytoplasm"/>
    <property type="evidence" value="ECO:0007669"/>
    <property type="project" value="UniProtKB-SubCell"/>
</dbReference>
<dbReference type="GO" id="GO:0042802">
    <property type="term" value="F:identical protein binding"/>
    <property type="evidence" value="ECO:0000318"/>
    <property type="project" value="GO_Central"/>
</dbReference>
<dbReference type="GO" id="GO:0003992">
    <property type="term" value="F:N2-acetyl-L-ornithine:2-oxoglutarate 5-aminotransferase activity"/>
    <property type="evidence" value="ECO:0007669"/>
    <property type="project" value="UniProtKB-UniRule"/>
</dbReference>
<dbReference type="GO" id="GO:0030170">
    <property type="term" value="F:pyridoxal phosphate binding"/>
    <property type="evidence" value="ECO:0000318"/>
    <property type="project" value="GO_Central"/>
</dbReference>
<dbReference type="GO" id="GO:0009016">
    <property type="term" value="F:succinyldiaminopimelate transaminase activity"/>
    <property type="evidence" value="ECO:0007669"/>
    <property type="project" value="UniProtKB-UniRule"/>
</dbReference>
<dbReference type="GO" id="GO:0006526">
    <property type="term" value="P:L-arginine biosynthetic process"/>
    <property type="evidence" value="ECO:0007669"/>
    <property type="project" value="UniProtKB-UniRule"/>
</dbReference>
<dbReference type="GO" id="GO:0009089">
    <property type="term" value="P:lysine biosynthetic process via diaminopimelate"/>
    <property type="evidence" value="ECO:0007669"/>
    <property type="project" value="UniProtKB-UniRule"/>
</dbReference>
<dbReference type="CDD" id="cd00610">
    <property type="entry name" value="OAT_like"/>
    <property type="match status" value="1"/>
</dbReference>
<dbReference type="FunFam" id="3.40.640.10:FF:000004">
    <property type="entry name" value="Acetylornithine aminotransferase"/>
    <property type="match status" value="1"/>
</dbReference>
<dbReference type="FunFam" id="3.90.1150.10:FF:000009">
    <property type="entry name" value="Succinylornithine transaminase"/>
    <property type="match status" value="1"/>
</dbReference>
<dbReference type="Gene3D" id="3.90.1150.10">
    <property type="entry name" value="Aspartate Aminotransferase, domain 1"/>
    <property type="match status" value="1"/>
</dbReference>
<dbReference type="Gene3D" id="3.40.640.10">
    <property type="entry name" value="Type I PLP-dependent aspartate aminotransferase-like (Major domain)"/>
    <property type="match status" value="1"/>
</dbReference>
<dbReference type="HAMAP" id="MF_01107">
    <property type="entry name" value="ArgD_aminotrans_3"/>
    <property type="match status" value="1"/>
</dbReference>
<dbReference type="InterPro" id="IPR017652">
    <property type="entry name" value="Ac/SucOrn_transaminase_bac"/>
</dbReference>
<dbReference type="InterPro" id="IPR004636">
    <property type="entry name" value="AcOrn/SuccOrn_fam"/>
</dbReference>
<dbReference type="InterPro" id="IPR005814">
    <property type="entry name" value="Aminotrans_3"/>
</dbReference>
<dbReference type="InterPro" id="IPR049704">
    <property type="entry name" value="Aminotrans_3_PPA_site"/>
</dbReference>
<dbReference type="InterPro" id="IPR050103">
    <property type="entry name" value="Class-III_PLP-dep_AT"/>
</dbReference>
<dbReference type="InterPro" id="IPR015424">
    <property type="entry name" value="PyrdxlP-dep_Trfase"/>
</dbReference>
<dbReference type="InterPro" id="IPR015421">
    <property type="entry name" value="PyrdxlP-dep_Trfase_major"/>
</dbReference>
<dbReference type="InterPro" id="IPR015422">
    <property type="entry name" value="PyrdxlP-dep_Trfase_small"/>
</dbReference>
<dbReference type="NCBIfam" id="TIGR03246">
    <property type="entry name" value="arg_catab_astC"/>
    <property type="match status" value="1"/>
</dbReference>
<dbReference type="NCBIfam" id="TIGR00707">
    <property type="entry name" value="argD"/>
    <property type="match status" value="1"/>
</dbReference>
<dbReference type="NCBIfam" id="NF002325">
    <property type="entry name" value="PRK01278.1"/>
    <property type="match status" value="1"/>
</dbReference>
<dbReference type="NCBIfam" id="NF003468">
    <property type="entry name" value="PRK05093.1"/>
    <property type="match status" value="1"/>
</dbReference>
<dbReference type="NCBIfam" id="NF009047">
    <property type="entry name" value="PRK12381.1"/>
    <property type="match status" value="1"/>
</dbReference>
<dbReference type="PANTHER" id="PTHR11986:SF122">
    <property type="entry name" value="ACETYLORNITHINE_SUCCINYLDIAMINOPIMELATE AMINOTRANSFERASE"/>
    <property type="match status" value="1"/>
</dbReference>
<dbReference type="PANTHER" id="PTHR11986">
    <property type="entry name" value="AMINOTRANSFERASE CLASS III"/>
    <property type="match status" value="1"/>
</dbReference>
<dbReference type="Pfam" id="PF00202">
    <property type="entry name" value="Aminotran_3"/>
    <property type="match status" value="1"/>
</dbReference>
<dbReference type="PIRSF" id="PIRSF000521">
    <property type="entry name" value="Transaminase_4ab_Lys_Orn"/>
    <property type="match status" value="1"/>
</dbReference>
<dbReference type="SUPFAM" id="SSF53383">
    <property type="entry name" value="PLP-dependent transferases"/>
    <property type="match status" value="1"/>
</dbReference>
<dbReference type="PROSITE" id="PS00600">
    <property type="entry name" value="AA_TRANSFER_CLASS_3"/>
    <property type="match status" value="1"/>
</dbReference>